<keyword id="KW-0963">Cytoplasm</keyword>
<gene>
    <name evidence="1" type="primary">yejK</name>
    <name type="ordered locus">ECP_2227</name>
</gene>
<evidence type="ECO:0000255" key="1">
    <source>
        <dbReference type="HAMAP-Rule" id="MF_00730"/>
    </source>
</evidence>
<feature type="chain" id="PRO_1000045923" description="Nucleoid-associated protein YejK">
    <location>
        <begin position="1"/>
        <end position="335"/>
    </location>
</feature>
<sequence length="335" mass="37823">MSLDINQIALHQLIKRDEQNLELVLRDSLLEPTETVVEMVAELHRVYSAKNKAYGLFSEESELAQTLRLQRQGEEDFLAFSRAATGRLRDELAKYPFADGGFVLFCHYRYLAVEYLLVAVLSNLSSMRVNENLDINPTHYLDINHADIVARIDLTEWETNPESTRYLTFLKGRVGRKVADFFMDFLGASEGLNAKAQNRGLLQAVDDFTAEAQLDKAERQNVRQQVYSYCNEQLQAGEEIELESLSKELAGVSEVSFTEFAAEKGYELEESFPADRSTLRQLTKFAGSGGGLTINFDAMLLGERIFWDPATDTLTIKGTPPNLRDQLQRRTSGGN</sequence>
<organism>
    <name type="scientific">Escherichia coli O6:K15:H31 (strain 536 / UPEC)</name>
    <dbReference type="NCBI Taxonomy" id="362663"/>
    <lineage>
        <taxon>Bacteria</taxon>
        <taxon>Pseudomonadati</taxon>
        <taxon>Pseudomonadota</taxon>
        <taxon>Gammaproteobacteria</taxon>
        <taxon>Enterobacterales</taxon>
        <taxon>Enterobacteriaceae</taxon>
        <taxon>Escherichia</taxon>
    </lineage>
</organism>
<reference key="1">
    <citation type="journal article" date="2006" name="Mol. Microbiol.">
        <title>Role of pathogenicity island-associated integrases in the genome plasticity of uropathogenic Escherichia coli strain 536.</title>
        <authorList>
            <person name="Hochhut B."/>
            <person name="Wilde C."/>
            <person name="Balling G."/>
            <person name="Middendorf B."/>
            <person name="Dobrindt U."/>
            <person name="Brzuszkiewicz E."/>
            <person name="Gottschalk G."/>
            <person name="Carniel E."/>
            <person name="Hacker J."/>
        </authorList>
    </citation>
    <scope>NUCLEOTIDE SEQUENCE [LARGE SCALE GENOMIC DNA]</scope>
    <source>
        <strain>536 / UPEC</strain>
    </source>
</reference>
<accession>Q0TFQ3</accession>
<dbReference type="EMBL" id="CP000247">
    <property type="protein sequence ID" value="ABG70226.1"/>
    <property type="molecule type" value="Genomic_DNA"/>
</dbReference>
<dbReference type="RefSeq" id="WP_000050789.1">
    <property type="nucleotide sequence ID" value="NC_008253.1"/>
</dbReference>
<dbReference type="SMR" id="Q0TFQ3"/>
<dbReference type="GeneID" id="75206440"/>
<dbReference type="KEGG" id="ecp:ECP_2227"/>
<dbReference type="HOGENOM" id="CLU_063050_0_1_6"/>
<dbReference type="Proteomes" id="UP000009182">
    <property type="component" value="Chromosome"/>
</dbReference>
<dbReference type="GO" id="GO:0043590">
    <property type="term" value="C:bacterial nucleoid"/>
    <property type="evidence" value="ECO:0007669"/>
    <property type="project" value="TreeGrafter"/>
</dbReference>
<dbReference type="GO" id="GO:0005737">
    <property type="term" value="C:cytoplasm"/>
    <property type="evidence" value="ECO:0007669"/>
    <property type="project" value="UniProtKB-UniRule"/>
</dbReference>
<dbReference type="GO" id="GO:0003690">
    <property type="term" value="F:double-stranded DNA binding"/>
    <property type="evidence" value="ECO:0007669"/>
    <property type="project" value="TreeGrafter"/>
</dbReference>
<dbReference type="GO" id="GO:0003727">
    <property type="term" value="F:single-stranded RNA binding"/>
    <property type="evidence" value="ECO:0007669"/>
    <property type="project" value="TreeGrafter"/>
</dbReference>
<dbReference type="HAMAP" id="MF_00730">
    <property type="entry name" value="NdpA"/>
    <property type="match status" value="1"/>
</dbReference>
<dbReference type="InterPro" id="IPR007358">
    <property type="entry name" value="Nucleoid_associated_NdpA"/>
</dbReference>
<dbReference type="NCBIfam" id="NF001557">
    <property type="entry name" value="PRK00378.1"/>
    <property type="match status" value="1"/>
</dbReference>
<dbReference type="PANTHER" id="PTHR38772">
    <property type="match status" value="1"/>
</dbReference>
<dbReference type="PANTHER" id="PTHR38772:SF1">
    <property type="entry name" value="NUCLEOID-ASSOCIATED PROTEIN YEJK"/>
    <property type="match status" value="1"/>
</dbReference>
<dbReference type="Pfam" id="PF04245">
    <property type="entry name" value="NA37"/>
    <property type="match status" value="1"/>
</dbReference>
<proteinExistence type="inferred from homology"/>
<comment type="subcellular location">
    <subcellularLocation>
        <location evidence="1">Cytoplasm</location>
        <location evidence="1">Nucleoid</location>
    </subcellularLocation>
</comment>
<comment type="similarity">
    <text evidence="1">Belongs to the YejK family.</text>
</comment>
<name>NDPA_ECOL5</name>
<protein>
    <recommendedName>
        <fullName evidence="1">Nucleoid-associated protein YejK</fullName>
    </recommendedName>
</protein>